<name>NQRF_ACTSZ</name>
<comment type="function">
    <text evidence="1">NQR complex catalyzes the reduction of ubiquinone-1 to ubiquinol by two successive reactions, coupled with the transport of Na(+) ions from the cytoplasm to the periplasm. The first step is catalyzed by NqrF, which accepts electrons from NADH and reduces ubiquinone-1 to ubisemiquinone by a one-electron transfer pathway.</text>
</comment>
<comment type="catalytic activity">
    <reaction evidence="1">
        <text>a ubiquinone + n Na(+)(in) + NADH + H(+) = a ubiquinol + n Na(+)(out) + NAD(+)</text>
        <dbReference type="Rhea" id="RHEA:47748"/>
        <dbReference type="Rhea" id="RHEA-COMP:9565"/>
        <dbReference type="Rhea" id="RHEA-COMP:9566"/>
        <dbReference type="ChEBI" id="CHEBI:15378"/>
        <dbReference type="ChEBI" id="CHEBI:16389"/>
        <dbReference type="ChEBI" id="CHEBI:17976"/>
        <dbReference type="ChEBI" id="CHEBI:29101"/>
        <dbReference type="ChEBI" id="CHEBI:57540"/>
        <dbReference type="ChEBI" id="CHEBI:57945"/>
        <dbReference type="EC" id="7.2.1.1"/>
    </reaction>
</comment>
<comment type="cofactor">
    <cofactor evidence="1">
        <name>[2Fe-2S] cluster</name>
        <dbReference type="ChEBI" id="CHEBI:190135"/>
    </cofactor>
    <text evidence="1">Binds 1 [2Fe-2S] cluster.</text>
</comment>
<comment type="cofactor">
    <cofactor evidence="1">
        <name>FAD</name>
        <dbReference type="ChEBI" id="CHEBI:57692"/>
    </cofactor>
</comment>
<comment type="subunit">
    <text evidence="1">Composed of six subunits; NqrA, NqrB, NqrC, NqrD, NqrE and NqrF.</text>
</comment>
<comment type="subcellular location">
    <subcellularLocation>
        <location evidence="1">Cell inner membrane</location>
        <topology evidence="1">Single-pass membrane protein</topology>
    </subcellularLocation>
</comment>
<comment type="similarity">
    <text evidence="1">Belongs to the NqrF family.</text>
</comment>
<dbReference type="EC" id="7.2.1.1" evidence="1"/>
<dbReference type="EMBL" id="CP000746">
    <property type="protein sequence ID" value="ABR73978.1"/>
    <property type="molecule type" value="Genomic_DNA"/>
</dbReference>
<dbReference type="RefSeq" id="WP_012072358.1">
    <property type="nucleotide sequence ID" value="NC_009655.1"/>
</dbReference>
<dbReference type="SMR" id="A6VLY1"/>
<dbReference type="STRING" id="339671.Asuc_0604"/>
<dbReference type="KEGG" id="asu:Asuc_0604"/>
<dbReference type="eggNOG" id="COG2871">
    <property type="taxonomic scope" value="Bacteria"/>
</dbReference>
<dbReference type="HOGENOM" id="CLU_003827_7_2_6"/>
<dbReference type="OrthoDB" id="9806195at2"/>
<dbReference type="Proteomes" id="UP000001114">
    <property type="component" value="Chromosome"/>
</dbReference>
<dbReference type="GO" id="GO:0005886">
    <property type="term" value="C:plasma membrane"/>
    <property type="evidence" value="ECO:0007669"/>
    <property type="project" value="UniProtKB-SubCell"/>
</dbReference>
<dbReference type="GO" id="GO:0051537">
    <property type="term" value="F:2 iron, 2 sulfur cluster binding"/>
    <property type="evidence" value="ECO:0007669"/>
    <property type="project" value="UniProtKB-KW"/>
</dbReference>
<dbReference type="GO" id="GO:0009055">
    <property type="term" value="F:electron transfer activity"/>
    <property type="evidence" value="ECO:0007669"/>
    <property type="project" value="UniProtKB-UniRule"/>
</dbReference>
<dbReference type="GO" id="GO:0046872">
    <property type="term" value="F:metal ion binding"/>
    <property type="evidence" value="ECO:0007669"/>
    <property type="project" value="UniProtKB-KW"/>
</dbReference>
<dbReference type="GO" id="GO:0016655">
    <property type="term" value="F:oxidoreductase activity, acting on NAD(P)H, quinone or similar compound as acceptor"/>
    <property type="evidence" value="ECO:0007669"/>
    <property type="project" value="InterPro"/>
</dbReference>
<dbReference type="GO" id="GO:0006814">
    <property type="term" value="P:sodium ion transport"/>
    <property type="evidence" value="ECO:0007669"/>
    <property type="project" value="UniProtKB-UniRule"/>
</dbReference>
<dbReference type="CDD" id="cd06188">
    <property type="entry name" value="NADH_quinone_reductase"/>
    <property type="match status" value="1"/>
</dbReference>
<dbReference type="FunFam" id="2.40.30.10:FF:000064">
    <property type="entry name" value="Na(+)-translocating NADH-quinone reductase subunit F"/>
    <property type="match status" value="1"/>
</dbReference>
<dbReference type="FunFam" id="3.40.50.80:FF:000014">
    <property type="entry name" value="Na(+)-translocating NADH-quinone reductase subunit F"/>
    <property type="match status" value="1"/>
</dbReference>
<dbReference type="Gene3D" id="3.10.20.30">
    <property type="match status" value="1"/>
</dbReference>
<dbReference type="Gene3D" id="3.40.50.80">
    <property type="entry name" value="Nucleotide-binding domain of ferredoxin-NADP reductase (FNR) module"/>
    <property type="match status" value="1"/>
</dbReference>
<dbReference type="Gene3D" id="2.40.30.10">
    <property type="entry name" value="Translation factors"/>
    <property type="match status" value="1"/>
</dbReference>
<dbReference type="HAMAP" id="MF_00430">
    <property type="entry name" value="NqrF"/>
    <property type="match status" value="1"/>
</dbReference>
<dbReference type="InterPro" id="IPR036010">
    <property type="entry name" value="2Fe-2S_ferredoxin-like_sf"/>
</dbReference>
<dbReference type="InterPro" id="IPR001041">
    <property type="entry name" value="2Fe-2S_ferredoxin-type"/>
</dbReference>
<dbReference type="InterPro" id="IPR012675">
    <property type="entry name" value="Beta-grasp_dom_sf"/>
</dbReference>
<dbReference type="InterPro" id="IPR008333">
    <property type="entry name" value="Cbr1-like_FAD-bd_dom"/>
</dbReference>
<dbReference type="InterPro" id="IPR017927">
    <property type="entry name" value="FAD-bd_FR_type"/>
</dbReference>
<dbReference type="InterPro" id="IPR039261">
    <property type="entry name" value="FNR_nucleotide-bd"/>
</dbReference>
<dbReference type="InterPro" id="IPR010205">
    <property type="entry name" value="NqrF"/>
</dbReference>
<dbReference type="InterPro" id="IPR001433">
    <property type="entry name" value="OxRdtase_FAD/NAD-bd"/>
</dbReference>
<dbReference type="InterPro" id="IPR017938">
    <property type="entry name" value="Riboflavin_synthase-like_b-brl"/>
</dbReference>
<dbReference type="NCBIfam" id="TIGR01941">
    <property type="entry name" value="nqrF"/>
    <property type="match status" value="1"/>
</dbReference>
<dbReference type="PANTHER" id="PTHR43644">
    <property type="entry name" value="NA(+)-TRANSLOCATING NADH-QUINONE REDUCTASE SUBUNIT"/>
    <property type="match status" value="1"/>
</dbReference>
<dbReference type="PANTHER" id="PTHR43644:SF1">
    <property type="entry name" value="NAD(P)H-FLAVIN REDUCTASE"/>
    <property type="match status" value="1"/>
</dbReference>
<dbReference type="Pfam" id="PF00970">
    <property type="entry name" value="FAD_binding_6"/>
    <property type="match status" value="1"/>
</dbReference>
<dbReference type="Pfam" id="PF00111">
    <property type="entry name" value="Fer2"/>
    <property type="match status" value="1"/>
</dbReference>
<dbReference type="Pfam" id="PF00175">
    <property type="entry name" value="NAD_binding_1"/>
    <property type="match status" value="1"/>
</dbReference>
<dbReference type="PIRSF" id="PIRSF000044">
    <property type="entry name" value="Cis_Diol_DH_RD"/>
    <property type="match status" value="1"/>
</dbReference>
<dbReference type="SUPFAM" id="SSF54292">
    <property type="entry name" value="2Fe-2S ferredoxin-like"/>
    <property type="match status" value="1"/>
</dbReference>
<dbReference type="SUPFAM" id="SSF52343">
    <property type="entry name" value="Ferredoxin reductase-like, C-terminal NADP-linked domain"/>
    <property type="match status" value="1"/>
</dbReference>
<dbReference type="SUPFAM" id="SSF63380">
    <property type="entry name" value="Riboflavin synthase domain-like"/>
    <property type="match status" value="1"/>
</dbReference>
<dbReference type="PROSITE" id="PS51085">
    <property type="entry name" value="2FE2S_FER_2"/>
    <property type="match status" value="1"/>
</dbReference>
<dbReference type="PROSITE" id="PS51384">
    <property type="entry name" value="FAD_FR"/>
    <property type="match status" value="1"/>
</dbReference>
<feature type="chain" id="PRO_1000080573" description="Na(+)-translocating NADH-quinone reductase subunit F">
    <location>
        <begin position="1"/>
        <end position="409"/>
    </location>
</feature>
<feature type="transmembrane region" description="Helical" evidence="1">
    <location>
        <begin position="5"/>
        <end position="25"/>
    </location>
</feature>
<feature type="domain" description="2Fe-2S ferredoxin-type" evidence="1">
    <location>
        <begin position="34"/>
        <end position="128"/>
    </location>
</feature>
<feature type="domain" description="FAD-binding FR-type" evidence="1">
    <location>
        <begin position="131"/>
        <end position="271"/>
    </location>
</feature>
<feature type="binding site" evidence="1">
    <location>
        <position position="71"/>
    </location>
    <ligand>
        <name>[2Fe-2S] cluster</name>
        <dbReference type="ChEBI" id="CHEBI:190135"/>
    </ligand>
</feature>
<feature type="binding site" evidence="1">
    <location>
        <position position="77"/>
    </location>
    <ligand>
        <name>[2Fe-2S] cluster</name>
        <dbReference type="ChEBI" id="CHEBI:190135"/>
    </ligand>
</feature>
<feature type="binding site" evidence="1">
    <location>
        <position position="80"/>
    </location>
    <ligand>
        <name>[2Fe-2S] cluster</name>
        <dbReference type="ChEBI" id="CHEBI:190135"/>
    </ligand>
</feature>
<feature type="binding site" evidence="1">
    <location>
        <position position="112"/>
    </location>
    <ligand>
        <name>[2Fe-2S] cluster</name>
        <dbReference type="ChEBI" id="CHEBI:190135"/>
    </ligand>
</feature>
<keyword id="KW-0001">2Fe-2S</keyword>
<keyword id="KW-0997">Cell inner membrane</keyword>
<keyword id="KW-1003">Cell membrane</keyword>
<keyword id="KW-0274">FAD</keyword>
<keyword id="KW-0285">Flavoprotein</keyword>
<keyword id="KW-0406">Ion transport</keyword>
<keyword id="KW-0408">Iron</keyword>
<keyword id="KW-0411">Iron-sulfur</keyword>
<keyword id="KW-0472">Membrane</keyword>
<keyword id="KW-0479">Metal-binding</keyword>
<keyword id="KW-0520">NAD</keyword>
<keyword id="KW-1185">Reference proteome</keyword>
<keyword id="KW-0915">Sodium</keyword>
<keyword id="KW-0739">Sodium transport</keyword>
<keyword id="KW-1278">Translocase</keyword>
<keyword id="KW-0812">Transmembrane</keyword>
<keyword id="KW-1133">Transmembrane helix</keyword>
<keyword id="KW-0813">Transport</keyword>
<keyword id="KW-0830">Ubiquinone</keyword>
<gene>
    <name evidence="1" type="primary">nqrF</name>
    <name type="ordered locus">Asuc_0604</name>
</gene>
<organism>
    <name type="scientific">Actinobacillus succinogenes (strain ATCC 55618 / DSM 22257 / CCUG 43843 / 130Z)</name>
    <dbReference type="NCBI Taxonomy" id="339671"/>
    <lineage>
        <taxon>Bacteria</taxon>
        <taxon>Pseudomonadati</taxon>
        <taxon>Pseudomonadota</taxon>
        <taxon>Gammaproteobacteria</taxon>
        <taxon>Pasteurellales</taxon>
        <taxon>Pasteurellaceae</taxon>
        <taxon>Actinobacillus</taxon>
    </lineage>
</organism>
<reference key="1">
    <citation type="journal article" date="2010" name="BMC Genomics">
        <title>A genomic perspective on the potential of Actinobacillus succinogenes for industrial succinate production.</title>
        <authorList>
            <person name="McKinlay J.B."/>
            <person name="Laivenieks M."/>
            <person name="Schindler B.D."/>
            <person name="McKinlay A.A."/>
            <person name="Siddaramappa S."/>
            <person name="Challacombe J.F."/>
            <person name="Lowry S.R."/>
            <person name="Clum A."/>
            <person name="Lapidus A.L."/>
            <person name="Burkhart K.B."/>
            <person name="Harkins V."/>
            <person name="Vieille C."/>
        </authorList>
    </citation>
    <scope>NUCLEOTIDE SEQUENCE [LARGE SCALE GENOMIC DNA]</scope>
    <source>
        <strain>ATCC 55618 / DSM 22257 / CCUG 43843 / 130Z</strain>
    </source>
</reference>
<proteinExistence type="inferred from homology"/>
<evidence type="ECO:0000255" key="1">
    <source>
        <dbReference type="HAMAP-Rule" id="MF_00430"/>
    </source>
</evidence>
<sequence length="409" mass="45448">MDSNFIFGIGAFTAIVLVLAVVILIAKSKLVDSGDITISINDDPSKAITLPAGGKLLGALASKGIFVSSACGGGGSCGQCRVKVKSGGGEILPTELSHISKKEAKEGWRLSCQVNVKSSMDVELPEEVFGVKKWECTVISNDNKATFIKELKLAIPEGEEVPFRAGGYIQIEAEPHTVAYKDFDIPEEYHEDWDKFNLWRYVSKVDEHIIRAYSMASYPEEKGIIMLNVRIATPPPRNPNVPPGQMSSYIWSLKPGDKVTISGPFGEFFAKDTDAEMVFIGGGAGMAPMRSHIFDQLKRLHSKRKISFWYGARSKREMFYVEDFDQLQAENPNFTWHVALSDPLPEDNWDGYTGFIHNVLYENYLKNHEAPEDCEYYMCGPPVMNAAVIKMLEDLGVEHENILLDDFGG</sequence>
<protein>
    <recommendedName>
        <fullName evidence="1">Na(+)-translocating NADH-quinone reductase subunit F</fullName>
        <shortName evidence="1">Na(+)-NQR subunit F</shortName>
        <shortName evidence="1">Na(+)-translocating NQR subunit F</shortName>
        <ecNumber evidence="1">7.2.1.1</ecNumber>
    </recommendedName>
    <alternativeName>
        <fullName evidence="1">NQR complex subunit F</fullName>
    </alternativeName>
    <alternativeName>
        <fullName evidence="1">NQR-1 subunit F</fullName>
    </alternativeName>
</protein>
<accession>A6VLY1</accession>